<accession>A4VNA5</accession>
<keyword id="KW-0963">Cytoplasm</keyword>
<keyword id="KW-0227">DNA damage</keyword>
<keyword id="KW-0233">DNA recombination</keyword>
<keyword id="KW-0234">DNA repair</keyword>
<keyword id="KW-0238">DNA-binding</keyword>
<keyword id="KW-0255">Endonuclease</keyword>
<keyword id="KW-0378">Hydrolase</keyword>
<keyword id="KW-0460">Magnesium</keyword>
<keyword id="KW-0479">Metal-binding</keyword>
<keyword id="KW-0540">Nuclease</keyword>
<keyword id="KW-1185">Reference proteome</keyword>
<evidence type="ECO:0000255" key="1">
    <source>
        <dbReference type="HAMAP-Rule" id="MF_00034"/>
    </source>
</evidence>
<comment type="function">
    <text evidence="1">The RuvA-RuvB-RuvC complex processes Holliday junction (HJ) DNA during genetic recombination and DNA repair. Endonuclease that resolves HJ intermediates. Cleaves cruciform DNA by making single-stranded nicks across the HJ at symmetrical positions within the homologous arms, yielding a 5'-phosphate and a 3'-hydroxyl group; requires a central core of homology in the junction. The consensus cleavage sequence is 5'-(A/T)TT(C/G)-3'. Cleavage occurs on the 3'-side of the TT dinucleotide at the point of strand exchange. HJ branch migration catalyzed by RuvA-RuvB allows RuvC to scan DNA until it finds its consensus sequence, where it cleaves and resolves the cruciform DNA.</text>
</comment>
<comment type="catalytic activity">
    <reaction evidence="1">
        <text>Endonucleolytic cleavage at a junction such as a reciprocal single-stranded crossover between two homologous DNA duplexes (Holliday junction).</text>
        <dbReference type="EC" id="3.1.21.10"/>
    </reaction>
</comment>
<comment type="cofactor">
    <cofactor evidence="1">
        <name>Mg(2+)</name>
        <dbReference type="ChEBI" id="CHEBI:18420"/>
    </cofactor>
    <text evidence="1">Binds 2 Mg(2+) ion per subunit.</text>
</comment>
<comment type="subunit">
    <text evidence="1">Homodimer which binds Holliday junction (HJ) DNA. The HJ becomes 2-fold symmetrical on binding to RuvC with unstacked arms; it has a different conformation from HJ DNA in complex with RuvA. In the full resolvosome a probable DNA-RuvA(4)-RuvB(12)-RuvC(2) complex forms which resolves the HJ.</text>
</comment>
<comment type="subcellular location">
    <subcellularLocation>
        <location evidence="1">Cytoplasm</location>
    </subcellularLocation>
</comment>
<comment type="similarity">
    <text evidence="1">Belongs to the RuvC family.</text>
</comment>
<gene>
    <name evidence="1" type="primary">ruvC</name>
    <name type="ordered locus">PST_2810</name>
</gene>
<reference key="1">
    <citation type="journal article" date="2008" name="Proc. Natl. Acad. Sci. U.S.A.">
        <title>Nitrogen fixation island and rhizosphere competence traits in the genome of root-associated Pseudomonas stutzeri A1501.</title>
        <authorList>
            <person name="Yan Y."/>
            <person name="Yang J."/>
            <person name="Dou Y."/>
            <person name="Chen M."/>
            <person name="Ping S."/>
            <person name="Peng J."/>
            <person name="Lu W."/>
            <person name="Zhang W."/>
            <person name="Yao Z."/>
            <person name="Li H."/>
            <person name="Liu W."/>
            <person name="He S."/>
            <person name="Geng L."/>
            <person name="Zhang X."/>
            <person name="Yang F."/>
            <person name="Yu H."/>
            <person name="Zhan Y."/>
            <person name="Li D."/>
            <person name="Lin Z."/>
            <person name="Wang Y."/>
            <person name="Elmerich C."/>
            <person name="Lin M."/>
            <person name="Jin Q."/>
        </authorList>
    </citation>
    <scope>NUCLEOTIDE SEQUENCE [LARGE SCALE GENOMIC DNA]</scope>
    <source>
        <strain>A1501</strain>
    </source>
</reference>
<sequence length="174" mass="18350">MTLILGIDPGSRITGYGVVRDTGRGCEYVASGCIRTGSGELSERLRAVFSGVSEVIRTYGPVTMGIEQVFMARNADSALKLGQARGAAIVAGAEAGLQIAEYTATQVKQAIAGTGGADKQQVQMMVMHLLKLLEKPQIDASDALAIALCHAHHRQSLVPHGLIGAKRRGGRLRL</sequence>
<feature type="chain" id="PRO_1000002804" description="Crossover junction endodeoxyribonuclease RuvC">
    <location>
        <begin position="1"/>
        <end position="174"/>
    </location>
</feature>
<feature type="active site" evidence="1">
    <location>
        <position position="8"/>
    </location>
</feature>
<feature type="active site" evidence="1">
    <location>
        <position position="67"/>
    </location>
</feature>
<feature type="active site" evidence="1">
    <location>
        <position position="139"/>
    </location>
</feature>
<feature type="binding site" evidence="1">
    <location>
        <position position="8"/>
    </location>
    <ligand>
        <name>Mg(2+)</name>
        <dbReference type="ChEBI" id="CHEBI:18420"/>
        <label>1</label>
    </ligand>
</feature>
<feature type="binding site" evidence="1">
    <location>
        <position position="67"/>
    </location>
    <ligand>
        <name>Mg(2+)</name>
        <dbReference type="ChEBI" id="CHEBI:18420"/>
        <label>2</label>
    </ligand>
</feature>
<feature type="binding site" evidence="1">
    <location>
        <position position="139"/>
    </location>
    <ligand>
        <name>Mg(2+)</name>
        <dbReference type="ChEBI" id="CHEBI:18420"/>
        <label>1</label>
    </ligand>
</feature>
<protein>
    <recommendedName>
        <fullName evidence="1">Crossover junction endodeoxyribonuclease RuvC</fullName>
        <ecNumber evidence="1">3.1.21.10</ecNumber>
    </recommendedName>
    <alternativeName>
        <fullName evidence="1">Holliday junction nuclease RuvC</fullName>
    </alternativeName>
    <alternativeName>
        <fullName evidence="1">Holliday junction resolvase RuvC</fullName>
    </alternativeName>
</protein>
<proteinExistence type="inferred from homology"/>
<organism>
    <name type="scientific">Stutzerimonas stutzeri (strain A1501)</name>
    <name type="common">Pseudomonas stutzeri</name>
    <dbReference type="NCBI Taxonomy" id="379731"/>
    <lineage>
        <taxon>Bacteria</taxon>
        <taxon>Pseudomonadati</taxon>
        <taxon>Pseudomonadota</taxon>
        <taxon>Gammaproteobacteria</taxon>
        <taxon>Pseudomonadales</taxon>
        <taxon>Pseudomonadaceae</taxon>
        <taxon>Stutzerimonas</taxon>
    </lineage>
</organism>
<name>RUVC_STUS1</name>
<dbReference type="EC" id="3.1.21.10" evidence="1"/>
<dbReference type="EMBL" id="CP000304">
    <property type="protein sequence ID" value="ABP80456.1"/>
    <property type="molecule type" value="Genomic_DNA"/>
</dbReference>
<dbReference type="RefSeq" id="WP_011913913.1">
    <property type="nucleotide sequence ID" value="NC_009434.1"/>
</dbReference>
<dbReference type="SMR" id="A4VNA5"/>
<dbReference type="GeneID" id="75215306"/>
<dbReference type="KEGG" id="psa:PST_2810"/>
<dbReference type="eggNOG" id="COG0817">
    <property type="taxonomic scope" value="Bacteria"/>
</dbReference>
<dbReference type="HOGENOM" id="CLU_091257_2_1_6"/>
<dbReference type="Proteomes" id="UP000000233">
    <property type="component" value="Chromosome"/>
</dbReference>
<dbReference type="GO" id="GO:0005737">
    <property type="term" value="C:cytoplasm"/>
    <property type="evidence" value="ECO:0007669"/>
    <property type="project" value="UniProtKB-SubCell"/>
</dbReference>
<dbReference type="GO" id="GO:0048476">
    <property type="term" value="C:Holliday junction resolvase complex"/>
    <property type="evidence" value="ECO:0007669"/>
    <property type="project" value="UniProtKB-UniRule"/>
</dbReference>
<dbReference type="GO" id="GO:0008821">
    <property type="term" value="F:crossover junction DNA endonuclease activity"/>
    <property type="evidence" value="ECO:0007669"/>
    <property type="project" value="UniProtKB-UniRule"/>
</dbReference>
<dbReference type="GO" id="GO:0003677">
    <property type="term" value="F:DNA binding"/>
    <property type="evidence" value="ECO:0007669"/>
    <property type="project" value="UniProtKB-KW"/>
</dbReference>
<dbReference type="GO" id="GO:0000287">
    <property type="term" value="F:magnesium ion binding"/>
    <property type="evidence" value="ECO:0007669"/>
    <property type="project" value="UniProtKB-UniRule"/>
</dbReference>
<dbReference type="GO" id="GO:0006310">
    <property type="term" value="P:DNA recombination"/>
    <property type="evidence" value="ECO:0007669"/>
    <property type="project" value="UniProtKB-UniRule"/>
</dbReference>
<dbReference type="GO" id="GO:0006281">
    <property type="term" value="P:DNA repair"/>
    <property type="evidence" value="ECO:0007669"/>
    <property type="project" value="UniProtKB-UniRule"/>
</dbReference>
<dbReference type="CDD" id="cd16962">
    <property type="entry name" value="RuvC"/>
    <property type="match status" value="1"/>
</dbReference>
<dbReference type="FunFam" id="3.30.420.10:FF:000002">
    <property type="entry name" value="Crossover junction endodeoxyribonuclease RuvC"/>
    <property type="match status" value="1"/>
</dbReference>
<dbReference type="Gene3D" id="3.30.420.10">
    <property type="entry name" value="Ribonuclease H-like superfamily/Ribonuclease H"/>
    <property type="match status" value="1"/>
</dbReference>
<dbReference type="HAMAP" id="MF_00034">
    <property type="entry name" value="RuvC"/>
    <property type="match status" value="1"/>
</dbReference>
<dbReference type="InterPro" id="IPR012337">
    <property type="entry name" value="RNaseH-like_sf"/>
</dbReference>
<dbReference type="InterPro" id="IPR036397">
    <property type="entry name" value="RNaseH_sf"/>
</dbReference>
<dbReference type="InterPro" id="IPR020563">
    <property type="entry name" value="X-over_junc_endoDNase_Mg_BS"/>
</dbReference>
<dbReference type="InterPro" id="IPR002176">
    <property type="entry name" value="X-over_junc_endoDNase_RuvC"/>
</dbReference>
<dbReference type="NCBIfam" id="TIGR00228">
    <property type="entry name" value="ruvC"/>
    <property type="match status" value="1"/>
</dbReference>
<dbReference type="PANTHER" id="PTHR30194">
    <property type="entry name" value="CROSSOVER JUNCTION ENDODEOXYRIBONUCLEASE RUVC"/>
    <property type="match status" value="1"/>
</dbReference>
<dbReference type="PANTHER" id="PTHR30194:SF3">
    <property type="entry name" value="CROSSOVER JUNCTION ENDODEOXYRIBONUCLEASE RUVC"/>
    <property type="match status" value="1"/>
</dbReference>
<dbReference type="Pfam" id="PF02075">
    <property type="entry name" value="RuvC"/>
    <property type="match status" value="1"/>
</dbReference>
<dbReference type="PRINTS" id="PR00696">
    <property type="entry name" value="RSOLVASERUVC"/>
</dbReference>
<dbReference type="SUPFAM" id="SSF53098">
    <property type="entry name" value="Ribonuclease H-like"/>
    <property type="match status" value="1"/>
</dbReference>
<dbReference type="PROSITE" id="PS01321">
    <property type="entry name" value="RUVC"/>
    <property type="match status" value="1"/>
</dbReference>